<accession>O14468</accession>
<accession>D6W304</accession>
<reference key="1">
    <citation type="journal article" date="1997" name="Nature">
        <title>The nucleotide sequence of Saccharomyces cerevisiae chromosome XV.</title>
        <authorList>
            <person name="Dujon B."/>
            <person name="Albermann K."/>
            <person name="Aldea M."/>
            <person name="Alexandraki D."/>
            <person name="Ansorge W."/>
            <person name="Arino J."/>
            <person name="Benes V."/>
            <person name="Bohn C."/>
            <person name="Bolotin-Fukuhara M."/>
            <person name="Bordonne R."/>
            <person name="Boyer J."/>
            <person name="Camasses A."/>
            <person name="Casamayor A."/>
            <person name="Casas C."/>
            <person name="Cheret G."/>
            <person name="Cziepluch C."/>
            <person name="Daignan-Fornier B."/>
            <person name="Dang V.-D."/>
            <person name="de Haan M."/>
            <person name="Delius H."/>
            <person name="Durand P."/>
            <person name="Fairhead C."/>
            <person name="Feldmann H."/>
            <person name="Gaillon L."/>
            <person name="Galisson F."/>
            <person name="Gamo F.-J."/>
            <person name="Gancedo C."/>
            <person name="Goffeau A."/>
            <person name="Goulding S.E."/>
            <person name="Grivell L.A."/>
            <person name="Habbig B."/>
            <person name="Hand N.J."/>
            <person name="Hani J."/>
            <person name="Hattenhorst U."/>
            <person name="Hebling U."/>
            <person name="Hernando Y."/>
            <person name="Herrero E."/>
            <person name="Heumann K."/>
            <person name="Hiesel R."/>
            <person name="Hilger F."/>
            <person name="Hofmann B."/>
            <person name="Hollenberg C.P."/>
            <person name="Hughes B."/>
            <person name="Jauniaux J.-C."/>
            <person name="Kalogeropoulos A."/>
            <person name="Katsoulou C."/>
            <person name="Kordes E."/>
            <person name="Lafuente M.J."/>
            <person name="Landt O."/>
            <person name="Louis E.J."/>
            <person name="Maarse A.C."/>
            <person name="Madania A."/>
            <person name="Mannhaupt G."/>
            <person name="Marck C."/>
            <person name="Martin R.P."/>
            <person name="Mewes H.-W."/>
            <person name="Michaux G."/>
            <person name="Paces V."/>
            <person name="Parle-McDermott A.G."/>
            <person name="Pearson B.M."/>
            <person name="Perrin A."/>
            <person name="Pettersson B."/>
            <person name="Poch O."/>
            <person name="Pohl T.M."/>
            <person name="Poirey R."/>
            <person name="Portetelle D."/>
            <person name="Pujol A."/>
            <person name="Purnelle B."/>
            <person name="Ramezani Rad M."/>
            <person name="Rechmann S."/>
            <person name="Schwager C."/>
            <person name="Schweizer M."/>
            <person name="Sor F."/>
            <person name="Sterky F."/>
            <person name="Tarassov I.A."/>
            <person name="Teodoru C."/>
            <person name="Tettelin H."/>
            <person name="Thierry A."/>
            <person name="Tobiasch E."/>
            <person name="Tzermia M."/>
            <person name="Uhlen M."/>
            <person name="Unseld M."/>
            <person name="Valens M."/>
            <person name="Vandenbol M."/>
            <person name="Vetter I."/>
            <person name="Vlcek C."/>
            <person name="Voet M."/>
            <person name="Volckaert G."/>
            <person name="Voss H."/>
            <person name="Wambutt R."/>
            <person name="Wedler H."/>
            <person name="Wiemann S."/>
            <person name="Winsor B."/>
            <person name="Wolfe K.H."/>
            <person name="Zollner A."/>
            <person name="Zumstein E."/>
            <person name="Kleine K."/>
        </authorList>
    </citation>
    <scope>NUCLEOTIDE SEQUENCE [LARGE SCALE GENOMIC DNA]</scope>
    <source>
        <strain>ATCC 204508 / S288c</strain>
    </source>
</reference>
<reference key="2">
    <citation type="journal article" date="2014" name="G3 (Bethesda)">
        <title>The reference genome sequence of Saccharomyces cerevisiae: Then and now.</title>
        <authorList>
            <person name="Engel S.R."/>
            <person name="Dietrich F.S."/>
            <person name="Fisk D.G."/>
            <person name="Binkley G."/>
            <person name="Balakrishnan R."/>
            <person name="Costanzo M.C."/>
            <person name="Dwight S.S."/>
            <person name="Hitz B.C."/>
            <person name="Karra K."/>
            <person name="Nash R.S."/>
            <person name="Weng S."/>
            <person name="Wong E.D."/>
            <person name="Lloyd P."/>
            <person name="Skrzypek M.S."/>
            <person name="Miyasato S.R."/>
            <person name="Simison M."/>
            <person name="Cherry J.M."/>
        </authorList>
    </citation>
    <scope>GENOME REANNOTATION</scope>
    <source>
        <strain>ATCC 204508 / S288c</strain>
    </source>
</reference>
<reference key="3">
    <citation type="journal article" date="2003" name="Nature">
        <title>Global analysis of protein localization in budding yeast.</title>
        <authorList>
            <person name="Huh W.-K."/>
            <person name="Falvo J.V."/>
            <person name="Gerke L.C."/>
            <person name="Carroll A.S."/>
            <person name="Howson R.W."/>
            <person name="Weissman J.S."/>
            <person name="O'Shea E.K."/>
        </authorList>
    </citation>
    <scope>SUBCELLULAR LOCATION [LARGE SCALE ANALYSIS]</scope>
</reference>
<reference key="4">
    <citation type="journal article" date="2003" name="Nature">
        <title>Global analysis of protein expression in yeast.</title>
        <authorList>
            <person name="Ghaemmaghami S."/>
            <person name="Huh W.-K."/>
            <person name="Bower K."/>
            <person name="Howson R.W."/>
            <person name="Belle A."/>
            <person name="Dephoure N."/>
            <person name="O'Shea E.K."/>
            <person name="Weissman J.S."/>
        </authorList>
    </citation>
    <scope>LEVEL OF PROTEIN EXPRESSION [LARGE SCALE ANALYSIS]</scope>
</reference>
<dbReference type="EMBL" id="Z75212">
    <property type="protein sequence ID" value="CAA99623.1"/>
    <property type="molecule type" value="Genomic_DNA"/>
</dbReference>
<dbReference type="EMBL" id="Z75213">
    <property type="protein sequence ID" value="CAA99625.1"/>
    <property type="molecule type" value="Genomic_DNA"/>
</dbReference>
<dbReference type="EMBL" id="BK006948">
    <property type="protein sequence ID" value="DAA11070.1"/>
    <property type="molecule type" value="Genomic_DNA"/>
</dbReference>
<dbReference type="PIR" id="S71852">
    <property type="entry name" value="S71852"/>
</dbReference>
<dbReference type="SMR" id="O14468"/>
<dbReference type="BioGRID" id="34693">
    <property type="interactions" value="89"/>
</dbReference>
<dbReference type="FunCoup" id="O14468">
    <property type="interactions" value="15"/>
</dbReference>
<dbReference type="IntAct" id="O14468">
    <property type="interactions" value="5"/>
</dbReference>
<dbReference type="MINT" id="O14468"/>
<dbReference type="STRING" id="4932.YOR304C-A"/>
<dbReference type="iPTMnet" id="O14468"/>
<dbReference type="PaxDb" id="4932-YOR304C-A"/>
<dbReference type="PeptideAtlas" id="O14468"/>
<dbReference type="EnsemblFungi" id="YOR304C-A_mRNA">
    <property type="protein sequence ID" value="YOR304C-A"/>
    <property type="gene ID" value="YOR304C-A"/>
</dbReference>
<dbReference type="KEGG" id="sce:YOR304C-A"/>
<dbReference type="AGR" id="SGD:S000005830"/>
<dbReference type="SGD" id="S000005830">
    <property type="gene designation" value="YOR304C-A"/>
</dbReference>
<dbReference type="VEuPathDB" id="FungiDB:YOR304C-A"/>
<dbReference type="eggNOG" id="ENOG502SGXF">
    <property type="taxonomic scope" value="Eukaryota"/>
</dbReference>
<dbReference type="HOGENOM" id="CLU_192383_0_0_1"/>
<dbReference type="InParanoid" id="O14468"/>
<dbReference type="OMA" id="NHTEDRN"/>
<dbReference type="OrthoDB" id="4066296at2759"/>
<dbReference type="BioCyc" id="YEAST:G3O-33787-MONOMER"/>
<dbReference type="BioGRID-ORCS" id="854481">
    <property type="hits" value="2 hits in 10 CRISPR screens"/>
</dbReference>
<dbReference type="PRO" id="PR:O14468"/>
<dbReference type="Proteomes" id="UP000002311">
    <property type="component" value="Chromosome XV"/>
</dbReference>
<dbReference type="RNAct" id="O14468">
    <property type="molecule type" value="protein"/>
</dbReference>
<dbReference type="GO" id="GO:0005933">
    <property type="term" value="C:cellular bud"/>
    <property type="evidence" value="ECO:0007005"/>
    <property type="project" value="SGD"/>
</dbReference>
<dbReference type="GO" id="GO:0005935">
    <property type="term" value="C:cellular bud neck"/>
    <property type="evidence" value="ECO:0000314"/>
    <property type="project" value="SGD"/>
</dbReference>
<dbReference type="GO" id="GO:0005934">
    <property type="term" value="C:cellular bud tip"/>
    <property type="evidence" value="ECO:0000314"/>
    <property type="project" value="SGD"/>
</dbReference>
<dbReference type="GO" id="GO:0005737">
    <property type="term" value="C:cytoplasm"/>
    <property type="evidence" value="ECO:0007005"/>
    <property type="project" value="SGD"/>
</dbReference>
<dbReference type="GO" id="GO:0043332">
    <property type="term" value="C:mating projection tip"/>
    <property type="evidence" value="ECO:0007005"/>
    <property type="project" value="SGD"/>
</dbReference>
<dbReference type="GO" id="GO:0051017">
    <property type="term" value="P:actin filament bundle assembly"/>
    <property type="evidence" value="ECO:0000314"/>
    <property type="project" value="SGD"/>
</dbReference>
<comment type="subcellular location">
    <subcellularLocation>
        <location evidence="2">Cytoplasm</location>
    </subcellularLocation>
    <subcellularLocation>
        <location evidence="2">Bud</location>
    </subcellularLocation>
    <subcellularLocation>
        <location evidence="2">Bud neck</location>
    </subcellularLocation>
</comment>
<comment type="miscellaneous">
    <text evidence="3">Present with 656 molecules/cell in log phase SD medium.</text>
</comment>
<gene>
    <name type="ordered locus">YOR304C-A</name>
</gene>
<evidence type="ECO:0000256" key="1">
    <source>
        <dbReference type="SAM" id="MobiDB-lite"/>
    </source>
</evidence>
<evidence type="ECO:0000269" key="2">
    <source>
    </source>
</evidence>
<evidence type="ECO:0000269" key="3">
    <source>
    </source>
</evidence>
<proteinExistence type="evidence at protein level"/>
<organism>
    <name type="scientific">Saccharomyces cerevisiae (strain ATCC 204508 / S288c)</name>
    <name type="common">Baker's yeast</name>
    <dbReference type="NCBI Taxonomy" id="559292"/>
    <lineage>
        <taxon>Eukaryota</taxon>
        <taxon>Fungi</taxon>
        <taxon>Dikarya</taxon>
        <taxon>Ascomycota</taxon>
        <taxon>Saccharomycotina</taxon>
        <taxon>Saccharomycetes</taxon>
        <taxon>Saccharomycetales</taxon>
        <taxon>Saccharomycetaceae</taxon>
        <taxon>Saccharomyces</taxon>
    </lineage>
</organism>
<feature type="chain" id="PRO_0000245285" description="Uncharacterized protein YOR304C-A">
    <location>
        <begin position="1"/>
        <end position="76"/>
    </location>
</feature>
<feature type="region of interest" description="Disordered" evidence="1">
    <location>
        <begin position="1"/>
        <end position="28"/>
    </location>
</feature>
<feature type="compositionally biased region" description="Polar residues" evidence="1">
    <location>
        <begin position="16"/>
        <end position="26"/>
    </location>
</feature>
<protein>
    <recommendedName>
        <fullName>Uncharacterized protein YOR304C-A</fullName>
    </recommendedName>
</protein>
<keyword id="KW-0963">Cytoplasm</keyword>
<keyword id="KW-1185">Reference proteome</keyword>
<sequence>MSTEKLEASEEPQAPLANTSETNSIKGDTENIVTVFDLANEIEKSLKDVQRQMKENDDEFSRSIQAIEDKLNKMSR</sequence>
<name>YO304_YEAST</name>